<proteinExistence type="evidence at protein level"/>
<sequence length="217" mass="25074">MNIKDEHIDSVCSLLDQLVGNVSFKNLFTGYGLFHKEETMFAIWQNKKLYLRGEGVLAIQLTKLGCEPFTTNELNKRFVLSQYYALSDQILRSNRLCRKLIILSIKQILEQKLECTLRKLNRLKDLPNLTIKHERALIKVGITNVAMLREIGAENALVELKKSGSGATLDFYWKLVCALQNKNSQMLSQAEKERLLKKLNEVWRKNGLKGYRKLDDE</sequence>
<reference evidence="16 17" key="1">
    <citation type="journal article" date="1995" name="Proc. Natl. Acad. Sci. U.S.A.">
        <title>Identification of a DNA transformation gene required for com101A+ expression and supertransformer phenotype in Haemophilus influenzae.</title>
        <authorList>
            <person name="Zulty J.J."/>
            <person name="Barcak G.J."/>
        </authorList>
    </citation>
    <scope>NUCLEOTIDE SEQUENCE [GENOMIC DNA]</scope>
    <scope>INDUCTION</scope>
    <scope>DISRUPTION PHENOTYPE</scope>
    <scope>PUTATIVE VARIANT SHORT</scope>
    <source>
        <strain>ATCC 51907 / DSM 11121 / KW20 / Rd</strain>
    </source>
</reference>
<reference key="2">
    <citation type="journal article" date="1995" name="Science">
        <title>Whole-genome random sequencing and assembly of Haemophilus influenzae Rd.</title>
        <authorList>
            <person name="Fleischmann R.D."/>
            <person name="Adams M.D."/>
            <person name="White O."/>
            <person name="Clayton R.A."/>
            <person name="Kirkness E.F."/>
            <person name="Kerlavage A.R."/>
            <person name="Bult C.J."/>
            <person name="Tomb J.-F."/>
            <person name="Dougherty B.A."/>
            <person name="Merrick J.M."/>
            <person name="McKenney K."/>
            <person name="Sutton G.G."/>
            <person name="FitzHugh W."/>
            <person name="Fields C.A."/>
            <person name="Gocayne J.D."/>
            <person name="Scott J.D."/>
            <person name="Shirley R."/>
            <person name="Liu L.-I."/>
            <person name="Glodek A."/>
            <person name="Kelley J.M."/>
            <person name="Weidman J.F."/>
            <person name="Phillips C.A."/>
            <person name="Spriggs T."/>
            <person name="Hedblom E."/>
            <person name="Cotton M.D."/>
            <person name="Utterback T.R."/>
            <person name="Hanna M.C."/>
            <person name="Nguyen D.T."/>
            <person name="Saudek D.M."/>
            <person name="Brandon R.C."/>
            <person name="Fine L.D."/>
            <person name="Fritchman J.L."/>
            <person name="Fuhrmann J.L."/>
            <person name="Geoghagen N.S.M."/>
            <person name="Gnehm C.L."/>
            <person name="McDonald L.A."/>
            <person name="Small K.V."/>
            <person name="Fraser C.M."/>
            <person name="Smith H.O."/>
            <person name="Venter J.C."/>
        </authorList>
    </citation>
    <scope>NUCLEOTIDE SEQUENCE [LARGE SCALE GENOMIC DNA]</scope>
    <source>
        <strain>ATCC 51907 / DSM 11121 / KW20 / Rd</strain>
    </source>
</reference>
<reference key="3">
    <citation type="journal article" date="1991" name="J. Bacteriol.">
        <title>sxy-1, a Haemophilus influenzae mutation causing greatly enhanced spontaneous competence.</title>
        <authorList>
            <person name="Redfield R.J."/>
        </authorList>
    </citation>
    <scope>FUNCTION</scope>
    <scope>MUTANT SXY-1</scope>
    <source>
        <strain evidence="9">ATCC 51907 / DSM 11121 / KW20 / Rd</strain>
    </source>
</reference>
<reference key="4">
    <citation type="journal article" date="1994" name="J. Bacteriol.">
        <title>The Haemophilus influenzae sxy-1 mutation is in a newly identified gene essential for competence.</title>
        <authorList>
            <person name="Williams P.M."/>
            <person name="Bannister L.A."/>
            <person name="Redfield R.J."/>
        </authorList>
    </citation>
    <scope>FUNCTION</scope>
    <scope>IDENTIFICATION OF TFOX AS SXY</scope>
    <scope>DISRUPTION PHENOTYPE</scope>
    <scope>MUTAGENESIS OF VAL-19</scope>
</reference>
<reference key="5">
    <citation type="journal article" date="1997" name="J. Bacteriol.">
        <title>The Haemophilus influenzae dprABC genes constitute a competence-inducible operon that requires the product of the tfoX (sxy) gene for transcriptional activation.</title>
        <authorList>
            <person name="Karudapuram S."/>
            <person name="Barcak G.J."/>
        </authorList>
    </citation>
    <scope>FUNCTION</scope>
    <source>
        <strain evidence="13">ATCC 51907 / DSM 11121 / KW20 / Rd</strain>
    </source>
</reference>
<reference key="6">
    <citation type="journal article" date="2005" name="J. Mol. Biol.">
        <title>A novel CRP-dependent regulon controls expression of competence genes in Haemophilus influenzae.</title>
        <authorList>
            <person name="Redfield R.J."/>
            <person name="Cameron A.D."/>
            <person name="Qian Q."/>
            <person name="Hinds J."/>
            <person name="Ali T.R."/>
            <person name="Kroll J.S."/>
            <person name="Langford P.R."/>
        </authorList>
    </citation>
    <scope>FUNCTION</scope>
    <scope>INDUCTION</scope>
    <scope>DISRUPTION PHENOTYPE</scope>
    <source>
        <strain>ATCC 51907 / DSM 11121 / KW20 / Rd</strain>
    </source>
</reference>
<reference key="7">
    <citation type="journal article" date="2008" name="J. Mol. Biol.">
        <title>CRP binding and transcription activation at CRP-S sites.</title>
        <authorList>
            <person name="Cameron A.D."/>
            <person name="Redfield R.J."/>
        </authorList>
    </citation>
    <scope>FUNCTION</scope>
    <scope>DISRUPTION PHENOTYPE</scope>
    <source>
        <strain>ATCC 51907 / DSM 11121 / KW20 / Rd</strain>
    </source>
</reference>
<reference key="8">
    <citation type="journal article" date="2008" name="Nucleic Acids Res.">
        <title>RNA secondary structure regulates the translation of sxy and competence development in Haemophilus influenzae.</title>
        <authorList>
            <person name="Cameron A.D."/>
            <person name="Volar M."/>
            <person name="Bannister L.A."/>
            <person name="Redfield R.J."/>
        </authorList>
    </citation>
    <scope>INDUCTION</scope>
    <source>
        <strain evidence="10">ATCC 51907 / DSM 11121 / KW20 / Rd</strain>
    </source>
</reference>
<reference key="9">
    <citation type="journal article" date="2013" name="Mol. Microbiol.">
        <title>The availability of purine nucleotides regulates natural competence by controlling translation of the competence activator Sxy.</title>
        <authorList>
            <person name="Sinha S."/>
            <person name="Mell J."/>
            <person name="Redfield R."/>
        </authorList>
    </citation>
    <scope>INDUCTION</scope>
    <source>
        <strain evidence="11">ATCC 51907 / DSM 11121 / KW20 / Rd</strain>
    </source>
</reference>
<keyword id="KW-0010">Activator</keyword>
<keyword id="KW-0024">Alternative initiation</keyword>
<keyword id="KW-0178">Competence</keyword>
<keyword id="KW-1185">Reference proteome</keyword>
<keyword id="KW-0804">Transcription</keyword>
<keyword id="KW-0805">Transcription regulation</keyword>
<name>TFOX_HAEIN</name>
<comment type="function">
    <text evidence="1 2 4 6 7 8">Required for DNA transformation (PubMed:1653215, PubMed:18761017, PubMed:7724607, PubMed:7961436). Positively regulates genes required for DNA transformation (late competence-specific genes) in association with CRP (PubMed:15769466, PubMed:18761017). Required for expression of the late competence-specific gene, com101A (PubMed:7724607). Required for expression of the dprABC operon (PubMed:9244270).</text>
</comment>
<comment type="alternative products">
    <event type="alternative initiation"/>
    <isoform>
        <id>P43779-1</id>
        <name evidence="6">Long</name>
        <sequence type="displayed"/>
    </isoform>
    <isoform>
        <id>P43779-2</id>
        <name evidence="15">Short</name>
        <sequence type="described" ref="VSP_018799"/>
    </isoform>
</comment>
<comment type="induction">
    <text evidence="1 3 5 6">Constitutively transcribed, further induced about 50-fold on moving from rich to starvation medium (PubMed:7724607). By CRP and cAMP in starvation medium (PubMed:7724607). Translation increased by depletion of extra- or intra-cellular purine nucleotides in starvation medium. High levels of purine nucleotides by contrast decrease its translation under the same condition.</text>
</comment>
<comment type="disruption phenotype">
    <text evidence="1 4 6 7">Does not bind transforming DNA, is transformation deficient (PubMed:7724607, PubMed:7961436). Loss of expression of the competence regulatory element (CRE) regulon required for development of competence (PubMed:15769466, PubMed:18761017).</text>
</comment>
<comment type="similarity">
    <text evidence="14">Belongs to the Sxy/TfoX family.</text>
</comment>
<comment type="caution">
    <text evidence="6">It is uncertain whether Met-1 or Met-40 is the initiator; upon expression in E.coli a long and short isoform are seen.</text>
</comment>
<accession>P43779</accession>
<protein>
    <recommendedName>
        <fullName evidence="12">DNA transformation protein TfoX</fullName>
    </recommendedName>
    <alternativeName>
        <fullName evidence="11">Competence activator Sxy</fullName>
    </alternativeName>
    <alternativeName>
        <fullName>Protein Sxy</fullName>
    </alternativeName>
</protein>
<dbReference type="EMBL" id="U13205">
    <property type="protein sequence ID" value="AAC43320.1"/>
    <property type="molecule type" value="Genomic_DNA"/>
</dbReference>
<dbReference type="EMBL" id="U13205">
    <property type="protein sequence ID" value="AAC43321.1"/>
    <property type="molecule type" value="Genomic_DNA"/>
</dbReference>
<dbReference type="EMBL" id="L42023">
    <property type="protein sequence ID" value="AAC22258.1"/>
    <property type="molecule type" value="Genomic_DNA"/>
</dbReference>
<dbReference type="PIR" id="B64080">
    <property type="entry name" value="B64080"/>
</dbReference>
<dbReference type="RefSeq" id="NP_438758.1">
    <property type="nucleotide sequence ID" value="NC_000907.1"/>
</dbReference>
<dbReference type="SMR" id="P43779"/>
<dbReference type="STRING" id="71421.HI_0601"/>
<dbReference type="EnsemblBacteria" id="AAC22258">
    <property type="protein sequence ID" value="AAC22258"/>
    <property type="gene ID" value="HI_0601"/>
</dbReference>
<dbReference type="KEGG" id="hin:HI_0601"/>
<dbReference type="PATRIC" id="fig|71421.8.peg.622"/>
<dbReference type="eggNOG" id="COG3070">
    <property type="taxonomic scope" value="Bacteria"/>
</dbReference>
<dbReference type="HOGENOM" id="CLU_094990_2_0_6"/>
<dbReference type="OrthoDB" id="4225809at2"/>
<dbReference type="PhylomeDB" id="P43779"/>
<dbReference type="BioCyc" id="HINF71421:G1GJ1-611-MONOMER"/>
<dbReference type="Proteomes" id="UP000000579">
    <property type="component" value="Chromosome"/>
</dbReference>
<dbReference type="GO" id="GO:0071230">
    <property type="term" value="P:cellular response to amino acid stimulus"/>
    <property type="evidence" value="ECO:0000315"/>
    <property type="project" value="UniProtKB"/>
</dbReference>
<dbReference type="GO" id="GO:0071320">
    <property type="term" value="P:cellular response to cAMP"/>
    <property type="evidence" value="ECO:0000315"/>
    <property type="project" value="UniProtKB"/>
</dbReference>
<dbReference type="GO" id="GO:0071415">
    <property type="term" value="P:cellular response to purine-containing compound"/>
    <property type="evidence" value="ECO:0000270"/>
    <property type="project" value="UniProtKB"/>
</dbReference>
<dbReference type="GO" id="GO:0009267">
    <property type="term" value="P:cellular response to starvation"/>
    <property type="evidence" value="ECO:0000315"/>
    <property type="project" value="UniProtKB"/>
</dbReference>
<dbReference type="GO" id="GO:0009290">
    <property type="term" value="P:DNA import into cell involved in transformation"/>
    <property type="evidence" value="ECO:0000315"/>
    <property type="project" value="UniProtKB"/>
</dbReference>
<dbReference type="GO" id="GO:0030420">
    <property type="term" value="P:establishment of competence for transformation"/>
    <property type="evidence" value="ECO:0000315"/>
    <property type="project" value="UniProtKB"/>
</dbReference>
<dbReference type="GO" id="GO:0045893">
    <property type="term" value="P:positive regulation of DNA-templated transcription"/>
    <property type="evidence" value="ECO:0000315"/>
    <property type="project" value="UniProtKB"/>
</dbReference>
<dbReference type="GO" id="GO:0045809">
    <property type="term" value="P:positive regulation of establishment of competence for transformation"/>
    <property type="evidence" value="ECO:0000315"/>
    <property type="project" value="UniProtKB"/>
</dbReference>
<dbReference type="GO" id="GO:0006355">
    <property type="term" value="P:regulation of DNA-templated transcription"/>
    <property type="evidence" value="ECO:0000315"/>
    <property type="project" value="UniProtKB"/>
</dbReference>
<dbReference type="FunFam" id="1.10.150.20:FF:000236">
    <property type="entry name" value="DNA transformation protein tfoX"/>
    <property type="match status" value="1"/>
</dbReference>
<dbReference type="Gene3D" id="1.10.150.20">
    <property type="entry name" value="5' to 3' exonuclease, C-terminal subdomain"/>
    <property type="match status" value="1"/>
</dbReference>
<dbReference type="Gene3D" id="3.30.1460.30">
    <property type="entry name" value="YgaC/TfoX-N like chaperone"/>
    <property type="match status" value="1"/>
</dbReference>
<dbReference type="InterPro" id="IPR047525">
    <property type="entry name" value="TfoX-like"/>
</dbReference>
<dbReference type="InterPro" id="IPR026256">
    <property type="entry name" value="TfoX-like_gammaprotbact"/>
</dbReference>
<dbReference type="InterPro" id="IPR007077">
    <property type="entry name" value="TfoX_C"/>
</dbReference>
<dbReference type="InterPro" id="IPR007076">
    <property type="entry name" value="TfoX_N"/>
</dbReference>
<dbReference type="PANTHER" id="PTHR36121">
    <property type="entry name" value="PROTEIN SXY"/>
    <property type="match status" value="1"/>
</dbReference>
<dbReference type="PANTHER" id="PTHR36121:SF1">
    <property type="entry name" value="PROTEIN SXY"/>
    <property type="match status" value="1"/>
</dbReference>
<dbReference type="Pfam" id="PF04994">
    <property type="entry name" value="TfoX_C"/>
    <property type="match status" value="1"/>
</dbReference>
<dbReference type="Pfam" id="PF04993">
    <property type="entry name" value="TfoX_N"/>
    <property type="match status" value="1"/>
</dbReference>
<dbReference type="PIRSF" id="PIRSF028788">
    <property type="entry name" value="TfoX_Sxy"/>
    <property type="match status" value="1"/>
</dbReference>
<dbReference type="SUPFAM" id="SSF159894">
    <property type="entry name" value="YgaC/TfoX-N like"/>
    <property type="match status" value="1"/>
</dbReference>
<organism>
    <name type="scientific">Haemophilus influenzae (strain ATCC 51907 / DSM 11121 / KW20 / Rd)</name>
    <dbReference type="NCBI Taxonomy" id="71421"/>
    <lineage>
        <taxon>Bacteria</taxon>
        <taxon>Pseudomonadati</taxon>
        <taxon>Pseudomonadota</taxon>
        <taxon>Gammaproteobacteria</taxon>
        <taxon>Pasteurellales</taxon>
        <taxon>Pasteurellaceae</taxon>
        <taxon>Haemophilus</taxon>
    </lineage>
</organism>
<evidence type="ECO:0000269" key="1">
    <source>
    </source>
</evidence>
<evidence type="ECO:0000269" key="2">
    <source>
    </source>
</evidence>
<evidence type="ECO:0000269" key="3">
    <source>
    </source>
</evidence>
<evidence type="ECO:0000269" key="4">
    <source>
    </source>
</evidence>
<evidence type="ECO:0000269" key="5">
    <source>
    </source>
</evidence>
<evidence type="ECO:0000269" key="6">
    <source>
    </source>
</evidence>
<evidence type="ECO:0000269" key="7">
    <source>
    </source>
</evidence>
<evidence type="ECO:0000269" key="8">
    <source>
    </source>
</evidence>
<evidence type="ECO:0000303" key="9">
    <source>
    </source>
</evidence>
<evidence type="ECO:0000303" key="10">
    <source>
    </source>
</evidence>
<evidence type="ECO:0000303" key="11">
    <source>
    </source>
</evidence>
<evidence type="ECO:0000303" key="12">
    <source>
    </source>
</evidence>
<evidence type="ECO:0000303" key="13">
    <source>
    </source>
</evidence>
<evidence type="ECO:0000305" key="14"/>
<evidence type="ECO:0000305" key="15">
    <source>
    </source>
</evidence>
<evidence type="ECO:0000312" key="16">
    <source>
        <dbReference type="EMBL" id="AAC43320.1"/>
    </source>
</evidence>
<evidence type="ECO:0000312" key="17">
    <source>
        <dbReference type="EMBL" id="AAC43321.1"/>
    </source>
</evidence>
<feature type="chain" id="PRO_0000022483" description="DNA transformation protein TfoX">
    <location>
        <begin position="1"/>
        <end position="217"/>
    </location>
</feature>
<feature type="splice variant" id="VSP_018799" description="In isoform Short." evidence="15">
    <location>
        <begin position="1"/>
        <end position="39"/>
    </location>
</feature>
<feature type="mutagenesis site" description="In sxy-1; causes a 100-fold to 1000-fold increase in spontaneous natural competence." evidence="2 7">
    <original>V</original>
    <variation>I</variation>
    <location>
        <position position="19"/>
    </location>
</feature>
<feature type="sequence conflict" description="In Ref. 1; AAC43320/AAC43321." evidence="14" ref="1">
    <original>W</original>
    <variation>L</variation>
    <location>
        <position position="203"/>
    </location>
</feature>
<gene>
    <name evidence="12" type="primary">tfoX</name>
    <name evidence="9" type="synonym">sxy</name>
    <name type="ordered locus">HI_0601</name>
</gene>